<accession>B0C218</accession>
<protein>
    <recommendedName>
        <fullName evidence="1">3-phosphoshikimate 1-carboxyvinyltransferase</fullName>
        <ecNumber evidence="1">2.5.1.19</ecNumber>
    </recommendedName>
    <alternativeName>
        <fullName evidence="1">5-enolpyruvylshikimate-3-phosphate synthase</fullName>
        <shortName evidence="1">EPSP synthase</shortName>
        <shortName evidence="1">EPSPS</shortName>
    </alternativeName>
</protein>
<feature type="chain" id="PRO_1000077979" description="3-phosphoshikimate 1-carboxyvinyltransferase">
    <location>
        <begin position="1"/>
        <end position="446"/>
    </location>
</feature>
<feature type="active site" description="Proton acceptor" evidence="1">
    <location>
        <position position="332"/>
    </location>
</feature>
<feature type="binding site" evidence="1">
    <location>
        <position position="35"/>
    </location>
    <ligand>
        <name>3-phosphoshikimate</name>
        <dbReference type="ChEBI" id="CHEBI:145989"/>
    </ligand>
</feature>
<feature type="binding site" evidence="1">
    <location>
        <position position="35"/>
    </location>
    <ligand>
        <name>phosphoenolpyruvate</name>
        <dbReference type="ChEBI" id="CHEBI:58702"/>
    </ligand>
</feature>
<feature type="binding site" evidence="1">
    <location>
        <position position="36"/>
    </location>
    <ligand>
        <name>3-phosphoshikimate</name>
        <dbReference type="ChEBI" id="CHEBI:145989"/>
    </ligand>
</feature>
<feature type="binding site" evidence="1">
    <location>
        <position position="40"/>
    </location>
    <ligand>
        <name>3-phosphoshikimate</name>
        <dbReference type="ChEBI" id="CHEBI:145989"/>
    </ligand>
</feature>
<feature type="binding site" evidence="1">
    <location>
        <position position="108"/>
    </location>
    <ligand>
        <name>phosphoenolpyruvate</name>
        <dbReference type="ChEBI" id="CHEBI:58702"/>
    </ligand>
</feature>
<feature type="binding site" evidence="1">
    <location>
        <position position="137"/>
    </location>
    <ligand>
        <name>phosphoenolpyruvate</name>
        <dbReference type="ChEBI" id="CHEBI:58702"/>
    </ligand>
</feature>
<feature type="binding site" evidence="1">
    <location>
        <position position="182"/>
    </location>
    <ligand>
        <name>3-phosphoshikimate</name>
        <dbReference type="ChEBI" id="CHEBI:145989"/>
    </ligand>
</feature>
<feature type="binding site" evidence="1">
    <location>
        <position position="184"/>
    </location>
    <ligand>
        <name>3-phosphoshikimate</name>
        <dbReference type="ChEBI" id="CHEBI:145989"/>
    </ligand>
</feature>
<feature type="binding site" evidence="1">
    <location>
        <position position="184"/>
    </location>
    <ligand>
        <name>phosphoenolpyruvate</name>
        <dbReference type="ChEBI" id="CHEBI:58702"/>
    </ligand>
</feature>
<feature type="binding site" evidence="1">
    <location>
        <position position="332"/>
    </location>
    <ligand>
        <name>3-phosphoshikimate</name>
        <dbReference type="ChEBI" id="CHEBI:145989"/>
    </ligand>
</feature>
<feature type="binding site" evidence="1">
    <location>
        <position position="359"/>
    </location>
    <ligand>
        <name>3-phosphoshikimate</name>
        <dbReference type="ChEBI" id="CHEBI:145989"/>
    </ligand>
</feature>
<feature type="binding site" evidence="1">
    <location>
        <position position="363"/>
    </location>
    <ligand>
        <name>phosphoenolpyruvate</name>
        <dbReference type="ChEBI" id="CHEBI:58702"/>
    </ligand>
</feature>
<feature type="binding site" evidence="1">
    <location>
        <position position="405"/>
    </location>
    <ligand>
        <name>phosphoenolpyruvate</name>
        <dbReference type="ChEBI" id="CHEBI:58702"/>
    </ligand>
</feature>
<reference key="1">
    <citation type="journal article" date="2008" name="Proc. Natl. Acad. Sci. U.S.A.">
        <title>Niche adaptation and genome expansion in the chlorophyll d-producing cyanobacterium Acaryochloris marina.</title>
        <authorList>
            <person name="Swingley W.D."/>
            <person name="Chen M."/>
            <person name="Cheung P.C."/>
            <person name="Conrad A.L."/>
            <person name="Dejesa L.C."/>
            <person name="Hao J."/>
            <person name="Honchak B.M."/>
            <person name="Karbach L.E."/>
            <person name="Kurdoglu A."/>
            <person name="Lahiri S."/>
            <person name="Mastrian S.D."/>
            <person name="Miyashita H."/>
            <person name="Page L."/>
            <person name="Ramakrishna P."/>
            <person name="Satoh S."/>
            <person name="Sattley W.M."/>
            <person name="Shimada Y."/>
            <person name="Taylor H.L."/>
            <person name="Tomo T."/>
            <person name="Tsuchiya T."/>
            <person name="Wang Z.T."/>
            <person name="Raymond J."/>
            <person name="Mimuro M."/>
            <person name="Blankenship R.E."/>
            <person name="Touchman J.W."/>
        </authorList>
    </citation>
    <scope>NUCLEOTIDE SEQUENCE [LARGE SCALE GENOMIC DNA]</scope>
    <source>
        <strain>MBIC 11017</strain>
    </source>
</reference>
<dbReference type="EC" id="2.5.1.19" evidence="1"/>
<dbReference type="EMBL" id="CP000828">
    <property type="protein sequence ID" value="ABW27319.1"/>
    <property type="molecule type" value="Genomic_DNA"/>
</dbReference>
<dbReference type="SMR" id="B0C218"/>
<dbReference type="STRING" id="329726.AM1_2309"/>
<dbReference type="KEGG" id="amr:AM1_2309"/>
<dbReference type="eggNOG" id="COG0128">
    <property type="taxonomic scope" value="Bacteria"/>
</dbReference>
<dbReference type="HOGENOM" id="CLU_024321_0_1_3"/>
<dbReference type="OrthoDB" id="9809920at2"/>
<dbReference type="UniPathway" id="UPA00053">
    <property type="reaction ID" value="UER00089"/>
</dbReference>
<dbReference type="Proteomes" id="UP000000268">
    <property type="component" value="Chromosome"/>
</dbReference>
<dbReference type="GO" id="GO:0005737">
    <property type="term" value="C:cytoplasm"/>
    <property type="evidence" value="ECO:0007669"/>
    <property type="project" value="UniProtKB-SubCell"/>
</dbReference>
<dbReference type="GO" id="GO:0003866">
    <property type="term" value="F:3-phosphoshikimate 1-carboxyvinyltransferase activity"/>
    <property type="evidence" value="ECO:0007669"/>
    <property type="project" value="UniProtKB-UniRule"/>
</dbReference>
<dbReference type="GO" id="GO:0008652">
    <property type="term" value="P:amino acid biosynthetic process"/>
    <property type="evidence" value="ECO:0007669"/>
    <property type="project" value="UniProtKB-KW"/>
</dbReference>
<dbReference type="GO" id="GO:0009073">
    <property type="term" value="P:aromatic amino acid family biosynthetic process"/>
    <property type="evidence" value="ECO:0007669"/>
    <property type="project" value="UniProtKB-KW"/>
</dbReference>
<dbReference type="GO" id="GO:0009423">
    <property type="term" value="P:chorismate biosynthetic process"/>
    <property type="evidence" value="ECO:0007669"/>
    <property type="project" value="UniProtKB-UniRule"/>
</dbReference>
<dbReference type="CDD" id="cd01556">
    <property type="entry name" value="EPSP_synthase"/>
    <property type="match status" value="1"/>
</dbReference>
<dbReference type="FunFam" id="3.65.10.10:FF:000005">
    <property type="entry name" value="3-phosphoshikimate 1-carboxyvinyltransferase"/>
    <property type="match status" value="1"/>
</dbReference>
<dbReference type="FunFam" id="3.65.10.10:FF:000006">
    <property type="entry name" value="3-phosphoshikimate 1-carboxyvinyltransferase"/>
    <property type="match status" value="1"/>
</dbReference>
<dbReference type="Gene3D" id="3.65.10.10">
    <property type="entry name" value="Enolpyruvate transferase domain"/>
    <property type="match status" value="2"/>
</dbReference>
<dbReference type="HAMAP" id="MF_00210">
    <property type="entry name" value="EPSP_synth"/>
    <property type="match status" value="1"/>
</dbReference>
<dbReference type="InterPro" id="IPR001986">
    <property type="entry name" value="Enolpyruvate_Tfrase_dom"/>
</dbReference>
<dbReference type="InterPro" id="IPR036968">
    <property type="entry name" value="Enolpyruvate_Tfrase_sf"/>
</dbReference>
<dbReference type="InterPro" id="IPR006264">
    <property type="entry name" value="EPSP_synthase"/>
</dbReference>
<dbReference type="InterPro" id="IPR023193">
    <property type="entry name" value="EPSP_synthase_CS"/>
</dbReference>
<dbReference type="InterPro" id="IPR013792">
    <property type="entry name" value="RNA3'P_cycl/enolpyr_Trfase_a/b"/>
</dbReference>
<dbReference type="NCBIfam" id="TIGR01356">
    <property type="entry name" value="aroA"/>
    <property type="match status" value="1"/>
</dbReference>
<dbReference type="PANTHER" id="PTHR21090">
    <property type="entry name" value="AROM/DEHYDROQUINATE SYNTHASE"/>
    <property type="match status" value="1"/>
</dbReference>
<dbReference type="PANTHER" id="PTHR21090:SF5">
    <property type="entry name" value="PENTAFUNCTIONAL AROM POLYPEPTIDE"/>
    <property type="match status" value="1"/>
</dbReference>
<dbReference type="Pfam" id="PF00275">
    <property type="entry name" value="EPSP_synthase"/>
    <property type="match status" value="1"/>
</dbReference>
<dbReference type="PIRSF" id="PIRSF000505">
    <property type="entry name" value="EPSPS"/>
    <property type="match status" value="1"/>
</dbReference>
<dbReference type="SUPFAM" id="SSF55205">
    <property type="entry name" value="EPT/RTPC-like"/>
    <property type="match status" value="1"/>
</dbReference>
<dbReference type="PROSITE" id="PS00104">
    <property type="entry name" value="EPSP_SYNTHASE_1"/>
    <property type="match status" value="1"/>
</dbReference>
<dbReference type="PROSITE" id="PS00885">
    <property type="entry name" value="EPSP_SYNTHASE_2"/>
    <property type="match status" value="1"/>
</dbReference>
<comment type="function">
    <text evidence="1">Catalyzes the transfer of the enolpyruvyl moiety of phosphoenolpyruvate (PEP) to the 5-hydroxyl of shikimate-3-phosphate (S3P) to produce enolpyruvyl shikimate-3-phosphate and inorganic phosphate.</text>
</comment>
<comment type="catalytic activity">
    <reaction evidence="1">
        <text>3-phosphoshikimate + phosphoenolpyruvate = 5-O-(1-carboxyvinyl)-3-phosphoshikimate + phosphate</text>
        <dbReference type="Rhea" id="RHEA:21256"/>
        <dbReference type="ChEBI" id="CHEBI:43474"/>
        <dbReference type="ChEBI" id="CHEBI:57701"/>
        <dbReference type="ChEBI" id="CHEBI:58702"/>
        <dbReference type="ChEBI" id="CHEBI:145989"/>
        <dbReference type="EC" id="2.5.1.19"/>
    </reaction>
    <physiologicalReaction direction="left-to-right" evidence="1">
        <dbReference type="Rhea" id="RHEA:21257"/>
    </physiologicalReaction>
</comment>
<comment type="pathway">
    <text evidence="1">Metabolic intermediate biosynthesis; chorismate biosynthesis; chorismate from D-erythrose 4-phosphate and phosphoenolpyruvate: step 6/7.</text>
</comment>
<comment type="subunit">
    <text evidence="1">Monomer.</text>
</comment>
<comment type="subcellular location">
    <subcellularLocation>
        <location evidence="1">Cytoplasm</location>
    </subcellularLocation>
</comment>
<comment type="similarity">
    <text evidence="1">Belongs to the EPSP synthase family.</text>
</comment>
<gene>
    <name evidence="1" type="primary">aroA</name>
    <name type="ordered locus">AM1_2309</name>
</gene>
<keyword id="KW-0028">Amino-acid biosynthesis</keyword>
<keyword id="KW-0057">Aromatic amino acid biosynthesis</keyword>
<keyword id="KW-0963">Cytoplasm</keyword>
<keyword id="KW-1185">Reference proteome</keyword>
<keyword id="KW-0808">Transferase</keyword>
<evidence type="ECO:0000255" key="1">
    <source>
        <dbReference type="HAMAP-Rule" id="MF_00210"/>
    </source>
</evidence>
<name>AROA_ACAM1</name>
<sequence>MPTDVLTVCPAPTGTTWVIQSEGYLQGKTTIPGDKSISHRALMLGALASGETTIQGLLLGEDPRSTAHCFRALGAEISELNTEHVRVQGIGLGHLLEPDVVLDAGNSGTTLRLMLGILASHPDRLFTVTGDTSLCSRPMGRVIKPLQQMGAHIWGRQSDTLAPLAIRGQQLQPIHYPSPIASAQVKSCIMFAGLMAEGQTTITEPALSRDHSERMFAAFGANIIVDPDTCSVTVTGPAQLHGQAIIVPGDISSAAFWLVAAAIVPGSDIWIENVGVNPTRTGVLEVLEQMGAKMTLANQRTVAGEPVADIHIQHSQLHGTVIEGAVIPRLVDEVPILAVAALFAQGPTTIRDAAELRVKESDRLTAMATQLQKMGANITEQPDGLEIQGGASLQGADVDSFGDHRVGMSLAIAALNATGSTTIHRAEAAAISYPNFVATLQQLWHS</sequence>
<organism>
    <name type="scientific">Acaryochloris marina (strain MBIC 11017)</name>
    <dbReference type="NCBI Taxonomy" id="329726"/>
    <lineage>
        <taxon>Bacteria</taxon>
        <taxon>Bacillati</taxon>
        <taxon>Cyanobacteriota</taxon>
        <taxon>Cyanophyceae</taxon>
        <taxon>Acaryochloridales</taxon>
        <taxon>Acaryochloridaceae</taxon>
        <taxon>Acaryochloris</taxon>
    </lineage>
</organism>
<proteinExistence type="inferred from homology"/>